<name>RL18_MESH2</name>
<reference key="1">
    <citation type="journal article" date="2004" name="J. Bacteriol.">
        <title>The genome sequence of Mycoplasma hyopneumoniae strain 232, the agent of swine mycoplasmosis.</title>
        <authorList>
            <person name="Minion F.C."/>
            <person name="Lefkowitz E.J."/>
            <person name="Madsen M.L."/>
            <person name="Cleary B.J."/>
            <person name="Swartzell S.M."/>
            <person name="Mahairas G.G."/>
        </authorList>
    </citation>
    <scope>NUCLEOTIDE SEQUENCE [LARGE SCALE GENOMIC DNA]</scope>
    <source>
        <strain>232</strain>
    </source>
</reference>
<evidence type="ECO:0000255" key="1">
    <source>
        <dbReference type="HAMAP-Rule" id="MF_01337"/>
    </source>
</evidence>
<evidence type="ECO:0000305" key="2"/>
<protein>
    <recommendedName>
        <fullName evidence="1">Large ribosomal subunit protein uL18</fullName>
    </recommendedName>
    <alternativeName>
        <fullName evidence="2">50S ribosomal protein L18</fullName>
    </alternativeName>
</protein>
<proteinExistence type="inferred from homology"/>
<organism>
    <name type="scientific">Mesomycoplasma hyopneumoniae (strain 232)</name>
    <name type="common">Mycoplasma hyopneumoniae</name>
    <dbReference type="NCBI Taxonomy" id="295358"/>
    <lineage>
        <taxon>Bacteria</taxon>
        <taxon>Bacillati</taxon>
        <taxon>Mycoplasmatota</taxon>
        <taxon>Mycoplasmoidales</taxon>
        <taxon>Metamycoplasmataceae</taxon>
        <taxon>Mesomycoplasma</taxon>
    </lineage>
</organism>
<dbReference type="EMBL" id="AE017332">
    <property type="protein sequence ID" value="AAV27460.1"/>
    <property type="molecule type" value="Genomic_DNA"/>
</dbReference>
<dbReference type="RefSeq" id="WP_011206041.1">
    <property type="nucleotide sequence ID" value="NC_006360.1"/>
</dbReference>
<dbReference type="SMR" id="Q601J8"/>
<dbReference type="KEGG" id="mhy:mhp204"/>
<dbReference type="eggNOG" id="COG0256">
    <property type="taxonomic scope" value="Bacteria"/>
</dbReference>
<dbReference type="HOGENOM" id="CLU_098841_0_1_14"/>
<dbReference type="PhylomeDB" id="Q601J8"/>
<dbReference type="Proteomes" id="UP000006822">
    <property type="component" value="Chromosome"/>
</dbReference>
<dbReference type="GO" id="GO:1990904">
    <property type="term" value="C:ribonucleoprotein complex"/>
    <property type="evidence" value="ECO:0007669"/>
    <property type="project" value="UniProtKB-KW"/>
</dbReference>
<dbReference type="GO" id="GO:0005840">
    <property type="term" value="C:ribosome"/>
    <property type="evidence" value="ECO:0007669"/>
    <property type="project" value="UniProtKB-KW"/>
</dbReference>
<dbReference type="GO" id="GO:0019843">
    <property type="term" value="F:rRNA binding"/>
    <property type="evidence" value="ECO:0007669"/>
    <property type="project" value="UniProtKB-UniRule"/>
</dbReference>
<dbReference type="GO" id="GO:0003735">
    <property type="term" value="F:structural constituent of ribosome"/>
    <property type="evidence" value="ECO:0007669"/>
    <property type="project" value="InterPro"/>
</dbReference>
<dbReference type="GO" id="GO:0006412">
    <property type="term" value="P:translation"/>
    <property type="evidence" value="ECO:0007669"/>
    <property type="project" value="UniProtKB-UniRule"/>
</dbReference>
<dbReference type="CDD" id="cd00432">
    <property type="entry name" value="Ribosomal_L18_L5e"/>
    <property type="match status" value="1"/>
</dbReference>
<dbReference type="Gene3D" id="3.30.420.100">
    <property type="match status" value="1"/>
</dbReference>
<dbReference type="HAMAP" id="MF_01337_B">
    <property type="entry name" value="Ribosomal_uL18_B"/>
    <property type="match status" value="1"/>
</dbReference>
<dbReference type="InterPro" id="IPR004389">
    <property type="entry name" value="Ribosomal_uL18_bac-type"/>
</dbReference>
<dbReference type="InterPro" id="IPR005484">
    <property type="entry name" value="Ribosomal_uL18_bac/euk"/>
</dbReference>
<dbReference type="NCBIfam" id="TIGR00060">
    <property type="entry name" value="L18_bact"/>
    <property type="match status" value="1"/>
</dbReference>
<dbReference type="Pfam" id="PF00861">
    <property type="entry name" value="Ribosomal_L18p"/>
    <property type="match status" value="1"/>
</dbReference>
<dbReference type="SUPFAM" id="SSF53137">
    <property type="entry name" value="Translational machinery components"/>
    <property type="match status" value="1"/>
</dbReference>
<feature type="chain" id="PRO_0000131297" description="Large ribosomal subunit protein uL18">
    <location>
        <begin position="1"/>
        <end position="121"/>
    </location>
</feature>
<comment type="function">
    <text evidence="1">This is one of the proteins that bind and probably mediate the attachment of the 5S RNA into the large ribosomal subunit, where it forms part of the central protuberance.</text>
</comment>
<comment type="subunit">
    <text evidence="1">Part of the 50S ribosomal subunit; part of the 5S rRNA/L5/L18/L25 subcomplex. Contacts the 5S and 23S rRNAs.</text>
</comment>
<comment type="similarity">
    <text evidence="1">Belongs to the universal ribosomal protein uL18 family.</text>
</comment>
<gene>
    <name evidence="1" type="primary">rplR</name>
    <name evidence="1" type="synonym">rpl18</name>
    <name type="ordered locus">mhp204</name>
</gene>
<sequence>MQKSRNYYRKVKHVRILKKLKSNREDKQKYRIGVYKSLRNFYAYIFDPWKNKVITSVSTLDKSNGYKGNIVSASSLAPDLYKKMKKLNLENESYIFDRSGYLFHGRVKAFANALRDQGVKF</sequence>
<accession>Q601J8</accession>
<keyword id="KW-0687">Ribonucleoprotein</keyword>
<keyword id="KW-0689">Ribosomal protein</keyword>
<keyword id="KW-0694">RNA-binding</keyword>
<keyword id="KW-0699">rRNA-binding</keyword>